<gene>
    <name evidence="1" type="primary">queA</name>
    <name type="ordered locus">lin1566</name>
</gene>
<proteinExistence type="inferred from homology"/>
<organism>
    <name type="scientific">Listeria innocua serovar 6a (strain ATCC BAA-680 / CLIP 11262)</name>
    <dbReference type="NCBI Taxonomy" id="272626"/>
    <lineage>
        <taxon>Bacteria</taxon>
        <taxon>Bacillati</taxon>
        <taxon>Bacillota</taxon>
        <taxon>Bacilli</taxon>
        <taxon>Bacillales</taxon>
        <taxon>Listeriaceae</taxon>
        <taxon>Listeria</taxon>
    </lineage>
</organism>
<feature type="chain" id="PRO_0000165413" description="S-adenosylmethionine:tRNA ribosyltransferase-isomerase">
    <location>
        <begin position="1"/>
        <end position="342"/>
    </location>
</feature>
<sequence length="342" mass="38228">MKVEDFDFDLPEELIAQTPLLDRTSSRLMVLDKESGEIKDQHFTDIISYLNKGDALVLNDTRVLPARLHGIKDETGAHIEVLLLKQKEGNAWETLVKPAKRIRKGATITFGDGALKATCLEELEHGGRILEFSYEGIFYEVLEQLGEMPLPPYIKEQLADQDRYQTVYAKENGSAAAPTAGLHFTEELLAQISAKGVEIIFVTLHVGLGTFRPVDVEDTQNHKMHSEFYRLTEESADRINKIKSAGGKVVAVGTTSIRTLETIASRHDGKLIAESGWTDIFISPGYEFQAVDALITNFHLPKSTLIMLVSALSDRTKILAAYNHAVEQQYRFFSFGDAMFIH</sequence>
<evidence type="ECO:0000255" key="1">
    <source>
        <dbReference type="HAMAP-Rule" id="MF_00113"/>
    </source>
</evidence>
<dbReference type="EC" id="2.4.99.17" evidence="1"/>
<dbReference type="EMBL" id="AL596169">
    <property type="protein sequence ID" value="CAC96797.1"/>
    <property type="molecule type" value="Genomic_DNA"/>
</dbReference>
<dbReference type="PIR" id="AE1628">
    <property type="entry name" value="AE1628"/>
</dbReference>
<dbReference type="RefSeq" id="WP_003762400.1">
    <property type="nucleotide sequence ID" value="NC_003212.1"/>
</dbReference>
<dbReference type="SMR" id="Q92BI3"/>
<dbReference type="STRING" id="272626.gene:17565897"/>
<dbReference type="KEGG" id="lin:lin1566"/>
<dbReference type="eggNOG" id="COG0809">
    <property type="taxonomic scope" value="Bacteria"/>
</dbReference>
<dbReference type="HOGENOM" id="CLU_039110_1_0_9"/>
<dbReference type="OrthoDB" id="9805933at2"/>
<dbReference type="UniPathway" id="UPA00392"/>
<dbReference type="Proteomes" id="UP000002513">
    <property type="component" value="Chromosome"/>
</dbReference>
<dbReference type="GO" id="GO:0005737">
    <property type="term" value="C:cytoplasm"/>
    <property type="evidence" value="ECO:0007669"/>
    <property type="project" value="UniProtKB-SubCell"/>
</dbReference>
<dbReference type="GO" id="GO:0051075">
    <property type="term" value="F:S-adenosylmethionine:tRNA ribosyltransferase-isomerase activity"/>
    <property type="evidence" value="ECO:0007669"/>
    <property type="project" value="UniProtKB-EC"/>
</dbReference>
<dbReference type="GO" id="GO:0008616">
    <property type="term" value="P:queuosine biosynthetic process"/>
    <property type="evidence" value="ECO:0007669"/>
    <property type="project" value="UniProtKB-UniRule"/>
</dbReference>
<dbReference type="GO" id="GO:0002099">
    <property type="term" value="P:tRNA wobble guanine modification"/>
    <property type="evidence" value="ECO:0007669"/>
    <property type="project" value="TreeGrafter"/>
</dbReference>
<dbReference type="FunFam" id="2.40.10.240:FF:000002">
    <property type="entry name" value="S-adenosylmethionine:tRNA ribosyltransferase-isomerase"/>
    <property type="match status" value="1"/>
</dbReference>
<dbReference type="FunFam" id="3.40.1780.10:FF:000001">
    <property type="entry name" value="S-adenosylmethionine:tRNA ribosyltransferase-isomerase"/>
    <property type="match status" value="1"/>
</dbReference>
<dbReference type="Gene3D" id="2.40.10.240">
    <property type="entry name" value="QueA-like"/>
    <property type="match status" value="1"/>
</dbReference>
<dbReference type="Gene3D" id="3.40.1780.10">
    <property type="entry name" value="QueA-like"/>
    <property type="match status" value="1"/>
</dbReference>
<dbReference type="HAMAP" id="MF_00113">
    <property type="entry name" value="QueA"/>
    <property type="match status" value="1"/>
</dbReference>
<dbReference type="InterPro" id="IPR003699">
    <property type="entry name" value="QueA"/>
</dbReference>
<dbReference type="InterPro" id="IPR042118">
    <property type="entry name" value="QueA_dom1"/>
</dbReference>
<dbReference type="InterPro" id="IPR042119">
    <property type="entry name" value="QueA_dom2"/>
</dbReference>
<dbReference type="InterPro" id="IPR036100">
    <property type="entry name" value="QueA_sf"/>
</dbReference>
<dbReference type="NCBIfam" id="NF001140">
    <property type="entry name" value="PRK00147.1"/>
    <property type="match status" value="1"/>
</dbReference>
<dbReference type="NCBIfam" id="TIGR00113">
    <property type="entry name" value="queA"/>
    <property type="match status" value="1"/>
</dbReference>
<dbReference type="PANTHER" id="PTHR30307">
    <property type="entry name" value="S-ADENOSYLMETHIONINE:TRNA RIBOSYLTRANSFERASE-ISOMERASE"/>
    <property type="match status" value="1"/>
</dbReference>
<dbReference type="PANTHER" id="PTHR30307:SF0">
    <property type="entry name" value="S-ADENOSYLMETHIONINE:TRNA RIBOSYLTRANSFERASE-ISOMERASE"/>
    <property type="match status" value="1"/>
</dbReference>
<dbReference type="Pfam" id="PF02547">
    <property type="entry name" value="Queuosine_synth"/>
    <property type="match status" value="1"/>
</dbReference>
<dbReference type="SUPFAM" id="SSF111337">
    <property type="entry name" value="QueA-like"/>
    <property type="match status" value="1"/>
</dbReference>
<accession>Q92BI3</accession>
<name>QUEA_LISIN</name>
<reference key="1">
    <citation type="journal article" date="2001" name="Science">
        <title>Comparative genomics of Listeria species.</title>
        <authorList>
            <person name="Glaser P."/>
            <person name="Frangeul L."/>
            <person name="Buchrieser C."/>
            <person name="Rusniok C."/>
            <person name="Amend A."/>
            <person name="Baquero F."/>
            <person name="Berche P."/>
            <person name="Bloecker H."/>
            <person name="Brandt P."/>
            <person name="Chakraborty T."/>
            <person name="Charbit A."/>
            <person name="Chetouani F."/>
            <person name="Couve E."/>
            <person name="de Daruvar A."/>
            <person name="Dehoux P."/>
            <person name="Domann E."/>
            <person name="Dominguez-Bernal G."/>
            <person name="Duchaud E."/>
            <person name="Durant L."/>
            <person name="Dussurget O."/>
            <person name="Entian K.-D."/>
            <person name="Fsihi H."/>
            <person name="Garcia-del Portillo F."/>
            <person name="Garrido P."/>
            <person name="Gautier L."/>
            <person name="Goebel W."/>
            <person name="Gomez-Lopez N."/>
            <person name="Hain T."/>
            <person name="Hauf J."/>
            <person name="Jackson D."/>
            <person name="Jones L.-M."/>
            <person name="Kaerst U."/>
            <person name="Kreft J."/>
            <person name="Kuhn M."/>
            <person name="Kunst F."/>
            <person name="Kurapkat G."/>
            <person name="Madueno E."/>
            <person name="Maitournam A."/>
            <person name="Mata Vicente J."/>
            <person name="Ng E."/>
            <person name="Nedjari H."/>
            <person name="Nordsiek G."/>
            <person name="Novella S."/>
            <person name="de Pablos B."/>
            <person name="Perez-Diaz J.-C."/>
            <person name="Purcell R."/>
            <person name="Remmel B."/>
            <person name="Rose M."/>
            <person name="Schlueter T."/>
            <person name="Simoes N."/>
            <person name="Tierrez A."/>
            <person name="Vazquez-Boland J.-A."/>
            <person name="Voss H."/>
            <person name="Wehland J."/>
            <person name="Cossart P."/>
        </authorList>
    </citation>
    <scope>NUCLEOTIDE SEQUENCE [LARGE SCALE GENOMIC DNA]</scope>
    <source>
        <strain>ATCC BAA-680 / CLIP 11262</strain>
    </source>
</reference>
<keyword id="KW-0963">Cytoplasm</keyword>
<keyword id="KW-0671">Queuosine biosynthesis</keyword>
<keyword id="KW-0949">S-adenosyl-L-methionine</keyword>
<keyword id="KW-0808">Transferase</keyword>
<comment type="function">
    <text evidence="1">Transfers and isomerizes the ribose moiety from AdoMet to the 7-aminomethyl group of 7-deazaguanine (preQ1-tRNA) to give epoxyqueuosine (oQ-tRNA).</text>
</comment>
<comment type="catalytic activity">
    <reaction evidence="1">
        <text>7-aminomethyl-7-carbaguanosine(34) in tRNA + S-adenosyl-L-methionine = epoxyqueuosine(34) in tRNA + adenine + L-methionine + 2 H(+)</text>
        <dbReference type="Rhea" id="RHEA:32155"/>
        <dbReference type="Rhea" id="RHEA-COMP:10342"/>
        <dbReference type="Rhea" id="RHEA-COMP:18582"/>
        <dbReference type="ChEBI" id="CHEBI:15378"/>
        <dbReference type="ChEBI" id="CHEBI:16708"/>
        <dbReference type="ChEBI" id="CHEBI:57844"/>
        <dbReference type="ChEBI" id="CHEBI:59789"/>
        <dbReference type="ChEBI" id="CHEBI:82833"/>
        <dbReference type="ChEBI" id="CHEBI:194443"/>
        <dbReference type="EC" id="2.4.99.17"/>
    </reaction>
</comment>
<comment type="pathway">
    <text evidence="1">tRNA modification; tRNA-queuosine biosynthesis.</text>
</comment>
<comment type="subunit">
    <text evidence="1">Monomer.</text>
</comment>
<comment type="subcellular location">
    <subcellularLocation>
        <location evidence="1">Cytoplasm</location>
    </subcellularLocation>
</comment>
<comment type="similarity">
    <text evidence="1">Belongs to the QueA family.</text>
</comment>
<protein>
    <recommendedName>
        <fullName evidence="1">S-adenosylmethionine:tRNA ribosyltransferase-isomerase</fullName>
        <ecNumber evidence="1">2.4.99.17</ecNumber>
    </recommendedName>
    <alternativeName>
        <fullName evidence="1">Queuosine biosynthesis protein QueA</fullName>
    </alternativeName>
</protein>